<reference key="1">
    <citation type="journal article" date="1996" name="J. Bacteriol.">
        <title>Characterization of a glutathione-dependent formaldehyde dehydrogenase from Rhodobacter sphaeroides.</title>
        <authorList>
            <person name="Barber R.D."/>
            <person name="Rott M.A."/>
            <person name="Donohue T.J."/>
        </authorList>
    </citation>
    <scope>NUCLEOTIDE SEQUENCE [GENOMIC DNA]</scope>
</reference>
<reference key="2">
    <citation type="submission" date="2005-09" db="EMBL/GenBank/DDBJ databases">
        <title>Complete sequence of chromosome 1 of Rhodobacter sphaeroides 2.4.1.</title>
        <authorList>
            <person name="Copeland A."/>
            <person name="Lucas S."/>
            <person name="Lapidus A."/>
            <person name="Barry K."/>
            <person name="Detter J.C."/>
            <person name="Glavina T."/>
            <person name="Hammon N."/>
            <person name="Israni S."/>
            <person name="Pitluck S."/>
            <person name="Richardson P."/>
            <person name="Mackenzie C."/>
            <person name="Choudhary M."/>
            <person name="Larimer F."/>
            <person name="Hauser L.J."/>
            <person name="Land M."/>
            <person name="Donohue T.J."/>
            <person name="Kaplan S."/>
        </authorList>
    </citation>
    <scope>NUCLEOTIDE SEQUENCE [LARGE SCALE GENOMIC DNA]</scope>
    <source>
        <strain>ATCC 17023 / DSM 158 / JCM 6121 / CCUG 31486 / LMG 2827 / NBRC 12203 / NCIMB 8253 / ATH 2.4.1.</strain>
    </source>
</reference>
<feature type="chain" id="PRO_0000160780" description="Alcohol dehydrogenase class-3">
    <location>
        <begin position="1"/>
        <end position="376"/>
    </location>
</feature>
<feature type="binding site" evidence="1">
    <location>
        <position position="40"/>
    </location>
    <ligand>
        <name>Zn(2+)</name>
        <dbReference type="ChEBI" id="CHEBI:29105"/>
        <label>1</label>
        <note>catalytic</note>
    </ligand>
</feature>
<feature type="binding site" evidence="1">
    <location>
        <position position="62"/>
    </location>
    <ligand>
        <name>Zn(2+)</name>
        <dbReference type="ChEBI" id="CHEBI:29105"/>
        <label>1</label>
        <note>catalytic</note>
    </ligand>
</feature>
<feature type="binding site" evidence="1">
    <location>
        <position position="92"/>
    </location>
    <ligand>
        <name>Zn(2+)</name>
        <dbReference type="ChEBI" id="CHEBI:29105"/>
        <label>2</label>
    </ligand>
</feature>
<feature type="binding site" evidence="1">
    <location>
        <position position="95"/>
    </location>
    <ligand>
        <name>Zn(2+)</name>
        <dbReference type="ChEBI" id="CHEBI:29105"/>
        <label>2</label>
    </ligand>
</feature>
<feature type="binding site" evidence="1">
    <location>
        <position position="98"/>
    </location>
    <ligand>
        <name>Zn(2+)</name>
        <dbReference type="ChEBI" id="CHEBI:29105"/>
        <label>2</label>
    </ligand>
</feature>
<feature type="binding site" evidence="1">
    <location>
        <position position="106"/>
    </location>
    <ligand>
        <name>Zn(2+)</name>
        <dbReference type="ChEBI" id="CHEBI:29105"/>
        <label>2</label>
    </ligand>
</feature>
<feature type="binding site" evidence="1">
    <location>
        <position position="170"/>
    </location>
    <ligand>
        <name>Zn(2+)</name>
        <dbReference type="ChEBI" id="CHEBI:29105"/>
        <label>1</label>
        <note>catalytic</note>
    </ligand>
</feature>
<evidence type="ECO:0000250" key="1"/>
<evidence type="ECO:0000305" key="2"/>
<proteinExistence type="inferred from homology"/>
<keyword id="KW-0963">Cytoplasm</keyword>
<keyword id="KW-0479">Metal-binding</keyword>
<keyword id="KW-0520">NAD</keyword>
<keyword id="KW-0560">Oxidoreductase</keyword>
<keyword id="KW-1185">Reference proteome</keyword>
<keyword id="KW-0862">Zinc</keyword>
<dbReference type="EC" id="1.1.1.1"/>
<dbReference type="EC" id="1.1.1.-"/>
<dbReference type="EC" id="1.1.1.284"/>
<dbReference type="EMBL" id="L47326">
    <property type="protein sequence ID" value="AAB09774.1"/>
    <property type="molecule type" value="Genomic_DNA"/>
</dbReference>
<dbReference type="EMBL" id="CP000143">
    <property type="protein sequence ID" value="ABA78733.1"/>
    <property type="molecule type" value="Genomic_DNA"/>
</dbReference>
<dbReference type="RefSeq" id="WP_009564386.1">
    <property type="nucleotide sequence ID" value="NC_007493.2"/>
</dbReference>
<dbReference type="RefSeq" id="YP_352634.1">
    <property type="nucleotide sequence ID" value="NC_007493.2"/>
</dbReference>
<dbReference type="SMR" id="P72324"/>
<dbReference type="STRING" id="272943.RSP_2576"/>
<dbReference type="EnsemblBacteria" id="ABA78733">
    <property type="protein sequence ID" value="ABA78733"/>
    <property type="gene ID" value="RSP_2576"/>
</dbReference>
<dbReference type="GeneID" id="3720209"/>
<dbReference type="KEGG" id="rsp:RSP_2576"/>
<dbReference type="PATRIC" id="fig|272943.9.peg.1494"/>
<dbReference type="eggNOG" id="COG1062">
    <property type="taxonomic scope" value="Bacteria"/>
</dbReference>
<dbReference type="OrthoDB" id="9770544at2"/>
<dbReference type="PhylomeDB" id="P72324"/>
<dbReference type="Proteomes" id="UP000002703">
    <property type="component" value="Chromosome 1"/>
</dbReference>
<dbReference type="GO" id="GO:0005829">
    <property type="term" value="C:cytosol"/>
    <property type="evidence" value="ECO:0007669"/>
    <property type="project" value="TreeGrafter"/>
</dbReference>
<dbReference type="GO" id="GO:0004022">
    <property type="term" value="F:alcohol dehydrogenase (NAD+) activity"/>
    <property type="evidence" value="ECO:0007669"/>
    <property type="project" value="UniProtKB-EC"/>
</dbReference>
<dbReference type="GO" id="GO:0106322">
    <property type="term" value="F:S-(hydroxymethyl)glutathione dehydrogenase (NAD+) activity"/>
    <property type="evidence" value="ECO:0007669"/>
    <property type="project" value="RHEA"/>
</dbReference>
<dbReference type="GO" id="GO:0106321">
    <property type="term" value="F:S-(hydroxymethyl)glutathione dehydrogenase (NADP+) activity"/>
    <property type="evidence" value="ECO:0007669"/>
    <property type="project" value="RHEA"/>
</dbReference>
<dbReference type="GO" id="GO:0008270">
    <property type="term" value="F:zinc ion binding"/>
    <property type="evidence" value="ECO:0007669"/>
    <property type="project" value="InterPro"/>
</dbReference>
<dbReference type="GO" id="GO:0046294">
    <property type="term" value="P:formaldehyde catabolic process"/>
    <property type="evidence" value="ECO:0007669"/>
    <property type="project" value="InterPro"/>
</dbReference>
<dbReference type="GO" id="GO:0015945">
    <property type="term" value="P:methanol metabolic process"/>
    <property type="evidence" value="ECO:0000315"/>
    <property type="project" value="CACAO"/>
</dbReference>
<dbReference type="CDD" id="cd08300">
    <property type="entry name" value="alcohol_DH_class_III"/>
    <property type="match status" value="1"/>
</dbReference>
<dbReference type="FunFam" id="3.40.50.720:FF:000003">
    <property type="entry name" value="S-(hydroxymethyl)glutathione dehydrogenase"/>
    <property type="match status" value="1"/>
</dbReference>
<dbReference type="FunFam" id="3.90.180.10:FF:000001">
    <property type="entry name" value="S-(hydroxymethyl)glutathione dehydrogenase"/>
    <property type="match status" value="1"/>
</dbReference>
<dbReference type="Gene3D" id="3.90.180.10">
    <property type="entry name" value="Medium-chain alcohol dehydrogenases, catalytic domain"/>
    <property type="match status" value="1"/>
</dbReference>
<dbReference type="Gene3D" id="3.40.50.720">
    <property type="entry name" value="NAD(P)-binding Rossmann-like Domain"/>
    <property type="match status" value="1"/>
</dbReference>
<dbReference type="InterPro" id="IPR013149">
    <property type="entry name" value="ADH-like_C"/>
</dbReference>
<dbReference type="InterPro" id="IPR013154">
    <property type="entry name" value="ADH-like_N"/>
</dbReference>
<dbReference type="InterPro" id="IPR014183">
    <property type="entry name" value="ADH_3"/>
</dbReference>
<dbReference type="InterPro" id="IPR002328">
    <property type="entry name" value="ADH_Zn_CS"/>
</dbReference>
<dbReference type="InterPro" id="IPR011032">
    <property type="entry name" value="GroES-like_sf"/>
</dbReference>
<dbReference type="InterPro" id="IPR036291">
    <property type="entry name" value="NAD(P)-bd_dom_sf"/>
</dbReference>
<dbReference type="NCBIfam" id="TIGR02818">
    <property type="entry name" value="adh_III_F_hyde"/>
    <property type="match status" value="1"/>
</dbReference>
<dbReference type="PANTHER" id="PTHR43880">
    <property type="entry name" value="ALCOHOL DEHYDROGENASE"/>
    <property type="match status" value="1"/>
</dbReference>
<dbReference type="PANTHER" id="PTHR43880:SF12">
    <property type="entry name" value="ALCOHOL DEHYDROGENASE CLASS-3"/>
    <property type="match status" value="1"/>
</dbReference>
<dbReference type="Pfam" id="PF08240">
    <property type="entry name" value="ADH_N"/>
    <property type="match status" value="1"/>
</dbReference>
<dbReference type="Pfam" id="PF00107">
    <property type="entry name" value="ADH_zinc_N"/>
    <property type="match status" value="1"/>
</dbReference>
<dbReference type="SUPFAM" id="SSF50129">
    <property type="entry name" value="GroES-like"/>
    <property type="match status" value="2"/>
</dbReference>
<dbReference type="SUPFAM" id="SSF51735">
    <property type="entry name" value="NAD(P)-binding Rossmann-fold domains"/>
    <property type="match status" value="1"/>
</dbReference>
<dbReference type="PROSITE" id="PS00059">
    <property type="entry name" value="ADH_ZINC"/>
    <property type="match status" value="1"/>
</dbReference>
<sequence length="376" mass="39974">MRTRAAVAVEAGKPLEIMEVNLEGPKAGEVMVEIKATGICHTDEFTLSGADPEGMFPAILGHEGAGVVVEVGPGVTSVKPGDHVIPLYTPECRQCPSCLSQKTNLCTAIRGTQGQGLMPDGTSRFSMLDGTPILHYMGCSTFSNYTVLPEIAVAKVRPDAPFDKICYIGCGVTTGIGAVINTAKVEIGAKAVVFGLGGIGLNVIQGLKLAGADMIIGVDLNNAKKEWGERFGMTHFVNPSEIDGDVVAHLVNMTKTPFDQIGGADYTFDCTGNVKVMRQALEACHRGWGQSIVIGVAPAGAEIQTRPFQLVTGRVWKGSAFGGARGRTDVPKIVDWYMEGKIQIDPMITHILSLEEINKGFDLMHAGESIRSVVVF</sequence>
<gene>
    <name type="primary">adhI</name>
    <name type="ordered locus">RHOS4_11650</name>
    <name type="ORF">RSP_2576</name>
</gene>
<comment type="function">
    <text>Oxidizes long-chain aliphatic alcohols, long-chain hydroxylated fatty acids and S-hydroxymethylglutathione (hmGSH) in increasing order of preference. Shows little or no activity with short-chain aliphatic alcohols.</text>
</comment>
<comment type="catalytic activity">
    <reaction>
        <text>a primary alcohol + NAD(+) = an aldehyde + NADH + H(+)</text>
        <dbReference type="Rhea" id="RHEA:10736"/>
        <dbReference type="ChEBI" id="CHEBI:15378"/>
        <dbReference type="ChEBI" id="CHEBI:15734"/>
        <dbReference type="ChEBI" id="CHEBI:17478"/>
        <dbReference type="ChEBI" id="CHEBI:57540"/>
        <dbReference type="ChEBI" id="CHEBI:57945"/>
        <dbReference type="EC" id="1.1.1.1"/>
    </reaction>
</comment>
<comment type="catalytic activity">
    <reaction>
        <text>a secondary alcohol + NAD(+) = a ketone + NADH + H(+)</text>
        <dbReference type="Rhea" id="RHEA:10740"/>
        <dbReference type="ChEBI" id="CHEBI:15378"/>
        <dbReference type="ChEBI" id="CHEBI:17087"/>
        <dbReference type="ChEBI" id="CHEBI:35681"/>
        <dbReference type="ChEBI" id="CHEBI:57540"/>
        <dbReference type="ChEBI" id="CHEBI:57945"/>
        <dbReference type="EC" id="1.1.1.1"/>
    </reaction>
</comment>
<comment type="catalytic activity">
    <reaction>
        <text>S-(hydroxymethyl)glutathione + NADP(+) = S-formylglutathione + NADPH + H(+)</text>
        <dbReference type="Rhea" id="RHEA:19981"/>
        <dbReference type="ChEBI" id="CHEBI:15378"/>
        <dbReference type="ChEBI" id="CHEBI:57688"/>
        <dbReference type="ChEBI" id="CHEBI:57783"/>
        <dbReference type="ChEBI" id="CHEBI:58349"/>
        <dbReference type="ChEBI" id="CHEBI:58758"/>
        <dbReference type="EC" id="1.1.1.284"/>
    </reaction>
</comment>
<comment type="catalytic activity">
    <reaction>
        <text>S-(hydroxymethyl)glutathione + NAD(+) = S-formylglutathione + NADH + H(+)</text>
        <dbReference type="Rhea" id="RHEA:19985"/>
        <dbReference type="ChEBI" id="CHEBI:15378"/>
        <dbReference type="ChEBI" id="CHEBI:57540"/>
        <dbReference type="ChEBI" id="CHEBI:57688"/>
        <dbReference type="ChEBI" id="CHEBI:57945"/>
        <dbReference type="ChEBI" id="CHEBI:58758"/>
        <dbReference type="EC" id="1.1.1.284"/>
    </reaction>
</comment>
<comment type="cofactor">
    <cofactor evidence="1">
        <name>Zn(2+)</name>
        <dbReference type="ChEBI" id="CHEBI:29105"/>
    </cofactor>
    <text evidence="1">Binds 2 Zn(2+) ions per subunit.</text>
</comment>
<comment type="subunit">
    <text evidence="2">Homodimer.</text>
</comment>
<comment type="subcellular location">
    <subcellularLocation>
        <location>Cytoplasm</location>
    </subcellularLocation>
</comment>
<comment type="similarity">
    <text evidence="2">Belongs to the zinc-containing alcohol dehydrogenase family. Class-III subfamily.</text>
</comment>
<organism>
    <name type="scientific">Cereibacter sphaeroides (strain ATCC 17023 / DSM 158 / JCM 6121 / CCUG 31486 / LMG 2827 / NBRC 12203 / NCIMB 8253 / ATH 2.4.1.)</name>
    <name type="common">Rhodobacter sphaeroides</name>
    <dbReference type="NCBI Taxonomy" id="272943"/>
    <lineage>
        <taxon>Bacteria</taxon>
        <taxon>Pseudomonadati</taxon>
        <taxon>Pseudomonadota</taxon>
        <taxon>Alphaproteobacteria</taxon>
        <taxon>Rhodobacterales</taxon>
        <taxon>Paracoccaceae</taxon>
        <taxon>Cereibacter</taxon>
    </lineage>
</organism>
<protein>
    <recommendedName>
        <fullName>Alcohol dehydrogenase class-3</fullName>
        <ecNumber>1.1.1.1</ecNumber>
    </recommendedName>
    <alternativeName>
        <fullName>Alcohol dehydrogenase class-III</fullName>
    </alternativeName>
    <alternativeName>
        <fullName>Glutathione-dependent formaldehyde dehydrogenase</fullName>
        <shortName>FALDH</shortName>
        <shortName>FDH</shortName>
        <shortName>GSH-FDH</shortName>
        <ecNumber>1.1.1.-</ecNumber>
    </alternativeName>
    <alternativeName>
        <fullName>S-(hydroxymethyl)glutathione dehydrogenase</fullName>
        <ecNumber>1.1.1.284</ecNumber>
    </alternativeName>
</protein>
<name>ADHI_CERS4</name>
<accession>P72324</accession>
<accession>Q3J3A1</accession>